<organism>
    <name type="scientific">Arabidopsis thaliana</name>
    <name type="common">Mouse-ear cress</name>
    <dbReference type="NCBI Taxonomy" id="3702"/>
    <lineage>
        <taxon>Eukaryota</taxon>
        <taxon>Viridiplantae</taxon>
        <taxon>Streptophyta</taxon>
        <taxon>Embryophyta</taxon>
        <taxon>Tracheophyta</taxon>
        <taxon>Spermatophyta</taxon>
        <taxon>Magnoliopsida</taxon>
        <taxon>eudicotyledons</taxon>
        <taxon>Gunneridae</taxon>
        <taxon>Pentapetalae</taxon>
        <taxon>rosids</taxon>
        <taxon>malvids</taxon>
        <taxon>Brassicales</taxon>
        <taxon>Brassicaceae</taxon>
        <taxon>Camelineae</taxon>
        <taxon>Arabidopsis</taxon>
    </lineage>
</organism>
<gene>
    <name type="primary">CHX1</name>
    <name type="synonym">CHX01</name>
    <name type="ordered locus">At1g16380</name>
    <name type="ORF">F3O9.18</name>
</gene>
<keyword id="KW-0050">Antiport</keyword>
<keyword id="KW-0406">Ion transport</keyword>
<keyword id="KW-0472">Membrane</keyword>
<keyword id="KW-0630">Potassium</keyword>
<keyword id="KW-0633">Potassium transport</keyword>
<keyword id="KW-1185">Reference proteome</keyword>
<keyword id="KW-0812">Transmembrane</keyword>
<keyword id="KW-1133">Transmembrane helix</keyword>
<keyword id="KW-0813">Transport</keyword>
<name>CHX1_ARATH</name>
<proteinExistence type="evidence at transcript level"/>
<evidence type="ECO:0000250" key="1"/>
<evidence type="ECO:0000255" key="2"/>
<evidence type="ECO:0000269" key="3">
    <source>
    </source>
</evidence>
<evidence type="ECO:0000305" key="4"/>
<accession>Q9SA37</accession>
<dbReference type="EMBL" id="AY926465">
    <property type="protein sequence ID" value="AAX49537.1"/>
    <property type="molecule type" value="mRNA"/>
</dbReference>
<dbReference type="EMBL" id="AC006341">
    <property type="protein sequence ID" value="AAD34690.1"/>
    <property type="molecule type" value="Genomic_DNA"/>
</dbReference>
<dbReference type="EMBL" id="CP002684">
    <property type="protein sequence ID" value="AEE29444.1"/>
    <property type="molecule type" value="Genomic_DNA"/>
</dbReference>
<dbReference type="PIR" id="A86299">
    <property type="entry name" value="A86299"/>
</dbReference>
<dbReference type="RefSeq" id="NP_173088.1">
    <property type="nucleotide sequence ID" value="NM_101504.2"/>
</dbReference>
<dbReference type="BioGRID" id="23448">
    <property type="interactions" value="3"/>
</dbReference>
<dbReference type="IntAct" id="Q9SA37">
    <property type="interactions" value="3"/>
</dbReference>
<dbReference type="STRING" id="3702.Q9SA37"/>
<dbReference type="TCDB" id="2.A.37.4.7">
    <property type="family name" value="the monovalent cation:proton antiporter-2 (cpa2) family"/>
</dbReference>
<dbReference type="GlyGen" id="Q9SA37">
    <property type="glycosylation" value="1 site"/>
</dbReference>
<dbReference type="iPTMnet" id="Q9SA37"/>
<dbReference type="PaxDb" id="3702-AT1G16380.1"/>
<dbReference type="ProteomicsDB" id="246918"/>
<dbReference type="EnsemblPlants" id="AT1G16380.1">
    <property type="protein sequence ID" value="AT1G16380.1"/>
    <property type="gene ID" value="AT1G16380"/>
</dbReference>
<dbReference type="GeneID" id="838208"/>
<dbReference type="Gramene" id="AT1G16380.1">
    <property type="protein sequence ID" value="AT1G16380.1"/>
    <property type="gene ID" value="AT1G16380"/>
</dbReference>
<dbReference type="KEGG" id="ath:AT1G16380"/>
<dbReference type="Araport" id="AT1G16380"/>
<dbReference type="TAIR" id="AT1G16380">
    <property type="gene designation" value="ATCHX1"/>
</dbReference>
<dbReference type="eggNOG" id="KOG1650">
    <property type="taxonomic scope" value="Eukaryota"/>
</dbReference>
<dbReference type="HOGENOM" id="CLU_005126_6_2_1"/>
<dbReference type="InParanoid" id="Q9SA37"/>
<dbReference type="OMA" id="LVIQRHR"/>
<dbReference type="PhylomeDB" id="Q9SA37"/>
<dbReference type="PRO" id="PR:Q9SA37"/>
<dbReference type="Proteomes" id="UP000006548">
    <property type="component" value="Chromosome 1"/>
</dbReference>
<dbReference type="ExpressionAtlas" id="Q9SA37">
    <property type="expression patterns" value="baseline and differential"/>
</dbReference>
<dbReference type="GO" id="GO:0016020">
    <property type="term" value="C:membrane"/>
    <property type="evidence" value="ECO:0007669"/>
    <property type="project" value="UniProtKB-SubCell"/>
</dbReference>
<dbReference type="GO" id="GO:0015297">
    <property type="term" value="F:antiporter activity"/>
    <property type="evidence" value="ECO:0007669"/>
    <property type="project" value="UniProtKB-KW"/>
</dbReference>
<dbReference type="GO" id="GO:0006813">
    <property type="term" value="P:potassium ion transport"/>
    <property type="evidence" value="ECO:0007669"/>
    <property type="project" value="UniProtKB-KW"/>
</dbReference>
<dbReference type="GO" id="GO:1902600">
    <property type="term" value="P:proton transmembrane transport"/>
    <property type="evidence" value="ECO:0007669"/>
    <property type="project" value="InterPro"/>
</dbReference>
<dbReference type="FunFam" id="1.20.1530.20:FF:000019">
    <property type="entry name" value="Cation/H(+) antiporter 1"/>
    <property type="match status" value="1"/>
</dbReference>
<dbReference type="Gene3D" id="1.20.1530.20">
    <property type="match status" value="1"/>
</dbReference>
<dbReference type="InterPro" id="IPR006153">
    <property type="entry name" value="Cation/H_exchanger_TM"/>
</dbReference>
<dbReference type="InterPro" id="IPR050794">
    <property type="entry name" value="CPA2_transporter"/>
</dbReference>
<dbReference type="InterPro" id="IPR038770">
    <property type="entry name" value="Na+/solute_symporter_sf"/>
</dbReference>
<dbReference type="PANTHER" id="PTHR32468">
    <property type="entry name" value="CATION/H + ANTIPORTER"/>
    <property type="match status" value="1"/>
</dbReference>
<dbReference type="PANTHER" id="PTHR32468:SF18">
    <property type="entry name" value="CATION_H(+) ANTIPORTER 1"/>
    <property type="match status" value="1"/>
</dbReference>
<dbReference type="Pfam" id="PF23256">
    <property type="entry name" value="CHX17_2nd"/>
    <property type="match status" value="1"/>
</dbReference>
<dbReference type="Pfam" id="PF23259">
    <property type="entry name" value="CHX17_C"/>
    <property type="match status" value="1"/>
</dbReference>
<dbReference type="Pfam" id="PF00999">
    <property type="entry name" value="Na_H_Exchanger"/>
    <property type="match status" value="1"/>
</dbReference>
<comment type="function">
    <text evidence="1">May operate as a cation/H(+) antiporter.</text>
</comment>
<comment type="subcellular location">
    <subcellularLocation>
        <location evidence="1">Membrane</location>
        <topology evidence="1">Multi-pass membrane protein</topology>
    </subcellularLocation>
</comment>
<comment type="tissue specificity">
    <text evidence="3">Specifically expressed in pollen.</text>
</comment>
<comment type="similarity">
    <text evidence="4">Belongs to the monovalent cation:proton antiporter 2 (CPA2) transporter (TC 2.A.37) family. CHX (TC 2.A.37.4) subfamily.</text>
</comment>
<feature type="chain" id="PRO_0000394971" description="Cation/H(+) antiporter 1">
    <location>
        <begin position="1"/>
        <end position="785"/>
    </location>
</feature>
<feature type="transmembrane region" description="Helical" evidence="2">
    <location>
        <begin position="19"/>
        <end position="39"/>
    </location>
</feature>
<feature type="transmembrane region" description="Helical" evidence="2">
    <location>
        <begin position="44"/>
        <end position="64"/>
    </location>
</feature>
<feature type="transmembrane region" description="Helical" evidence="2">
    <location>
        <begin position="79"/>
        <end position="99"/>
    </location>
</feature>
<feature type="transmembrane region" description="Helical" evidence="2">
    <location>
        <begin position="112"/>
        <end position="132"/>
    </location>
</feature>
<feature type="transmembrane region" description="Helical" evidence="2">
    <location>
        <begin position="143"/>
        <end position="163"/>
    </location>
</feature>
<feature type="transmembrane region" description="Helical" evidence="2">
    <location>
        <begin position="179"/>
        <end position="199"/>
    </location>
</feature>
<feature type="transmembrane region" description="Helical" evidence="2">
    <location>
        <begin position="201"/>
        <end position="221"/>
    </location>
</feature>
<feature type="transmembrane region" description="Helical" evidence="2">
    <location>
        <begin position="240"/>
        <end position="260"/>
    </location>
</feature>
<feature type="transmembrane region" description="Helical" evidence="2">
    <location>
        <begin position="294"/>
        <end position="314"/>
    </location>
</feature>
<feature type="transmembrane region" description="Helical" evidence="2">
    <location>
        <begin position="323"/>
        <end position="343"/>
    </location>
</feature>
<feature type="transmembrane region" description="Helical" evidence="2">
    <location>
        <begin position="352"/>
        <end position="372"/>
    </location>
</feature>
<feature type="transmembrane region" description="Helical" evidence="2">
    <location>
        <begin position="389"/>
        <end position="409"/>
    </location>
</feature>
<reference key="1">
    <citation type="journal article" date="2004" name="Plant Physiol.">
        <title>Expression patterns of a novel AtCHX gene family highlight potential roles in osmotic adjustment and K+ homeostasis in pollen development.</title>
        <authorList>
            <person name="Sze H."/>
            <person name="Padmanaban S."/>
            <person name="Cellier F."/>
            <person name="Honys D."/>
            <person name="Cheng N.-H."/>
            <person name="Bock K.W."/>
            <person name="Conejero G."/>
            <person name="Li X."/>
            <person name="Twell D."/>
            <person name="Ward J.M."/>
            <person name="Hirschi K.D."/>
        </authorList>
    </citation>
    <scope>NUCLEOTIDE SEQUENCE [MRNA]</scope>
    <scope>TISSUE SPECIFICITY</scope>
    <scope>GENE FAMILY</scope>
    <scope>NOMENCLATURE</scope>
    <source>
        <tissue>Pollen</tissue>
    </source>
</reference>
<reference key="2">
    <citation type="journal article" date="2000" name="Nature">
        <title>Sequence and analysis of chromosome 1 of the plant Arabidopsis thaliana.</title>
        <authorList>
            <person name="Theologis A."/>
            <person name="Ecker J.R."/>
            <person name="Palm C.J."/>
            <person name="Federspiel N.A."/>
            <person name="Kaul S."/>
            <person name="White O."/>
            <person name="Alonso J."/>
            <person name="Altafi H."/>
            <person name="Araujo R."/>
            <person name="Bowman C.L."/>
            <person name="Brooks S.Y."/>
            <person name="Buehler E."/>
            <person name="Chan A."/>
            <person name="Chao Q."/>
            <person name="Chen H."/>
            <person name="Cheuk R.F."/>
            <person name="Chin C.W."/>
            <person name="Chung M.K."/>
            <person name="Conn L."/>
            <person name="Conway A.B."/>
            <person name="Conway A.R."/>
            <person name="Creasy T.H."/>
            <person name="Dewar K."/>
            <person name="Dunn P."/>
            <person name="Etgu P."/>
            <person name="Feldblyum T.V."/>
            <person name="Feng J.-D."/>
            <person name="Fong B."/>
            <person name="Fujii C.Y."/>
            <person name="Gill J.E."/>
            <person name="Goldsmith A.D."/>
            <person name="Haas B."/>
            <person name="Hansen N.F."/>
            <person name="Hughes B."/>
            <person name="Huizar L."/>
            <person name="Hunter J.L."/>
            <person name="Jenkins J."/>
            <person name="Johnson-Hopson C."/>
            <person name="Khan S."/>
            <person name="Khaykin E."/>
            <person name="Kim C.J."/>
            <person name="Koo H.L."/>
            <person name="Kremenetskaia I."/>
            <person name="Kurtz D.B."/>
            <person name="Kwan A."/>
            <person name="Lam B."/>
            <person name="Langin-Hooper S."/>
            <person name="Lee A."/>
            <person name="Lee J.M."/>
            <person name="Lenz C.A."/>
            <person name="Li J.H."/>
            <person name="Li Y.-P."/>
            <person name="Lin X."/>
            <person name="Liu S.X."/>
            <person name="Liu Z.A."/>
            <person name="Luros J.S."/>
            <person name="Maiti R."/>
            <person name="Marziali A."/>
            <person name="Militscher J."/>
            <person name="Miranda M."/>
            <person name="Nguyen M."/>
            <person name="Nierman W.C."/>
            <person name="Osborne B.I."/>
            <person name="Pai G."/>
            <person name="Peterson J."/>
            <person name="Pham P.K."/>
            <person name="Rizzo M."/>
            <person name="Rooney T."/>
            <person name="Rowley D."/>
            <person name="Sakano H."/>
            <person name="Salzberg S.L."/>
            <person name="Schwartz J.R."/>
            <person name="Shinn P."/>
            <person name="Southwick A.M."/>
            <person name="Sun H."/>
            <person name="Tallon L.J."/>
            <person name="Tambunga G."/>
            <person name="Toriumi M.J."/>
            <person name="Town C.D."/>
            <person name="Utterback T."/>
            <person name="Van Aken S."/>
            <person name="Vaysberg M."/>
            <person name="Vysotskaia V.S."/>
            <person name="Walker M."/>
            <person name="Wu D."/>
            <person name="Yu G."/>
            <person name="Fraser C.M."/>
            <person name="Venter J.C."/>
            <person name="Davis R.W."/>
        </authorList>
    </citation>
    <scope>NUCLEOTIDE SEQUENCE [LARGE SCALE GENOMIC DNA]</scope>
    <source>
        <strain>cv. Columbia</strain>
    </source>
</reference>
<reference key="3">
    <citation type="journal article" date="2017" name="Plant J.">
        <title>Araport11: a complete reannotation of the Arabidopsis thaliana reference genome.</title>
        <authorList>
            <person name="Cheng C.Y."/>
            <person name="Krishnakumar V."/>
            <person name="Chan A.P."/>
            <person name="Thibaud-Nissen F."/>
            <person name="Schobel S."/>
            <person name="Town C.D."/>
        </authorList>
    </citation>
    <scope>GENOME REANNOTATION</scope>
    <source>
        <strain>cv. Columbia</strain>
    </source>
</reference>
<reference key="4">
    <citation type="journal article" date="2001" name="Plant Physiol.">
        <title>Phylogenetic relationships within cation transporter families of Arabidopsis.</title>
        <authorList>
            <person name="Maeser P."/>
            <person name="Thomine S."/>
            <person name="Schroeder J.I."/>
            <person name="Ward J.M."/>
            <person name="Hirschi K."/>
            <person name="Sze H."/>
            <person name="Talke I.N."/>
            <person name="Amtmann A."/>
            <person name="Maathuis F.J.M."/>
            <person name="Sanders D."/>
            <person name="Harper J.F."/>
            <person name="Tchieu J."/>
            <person name="Gribskov M."/>
            <person name="Persans M.W."/>
            <person name="Salt D.E."/>
            <person name="Kim S.A."/>
            <person name="Guerinot M.L."/>
        </authorList>
    </citation>
    <scope>GENE FAMILY</scope>
    <scope>NOMENCLATURE</scope>
</reference>
<sequence length="785" mass="88909">MDPKMLFCLPEGDALFNPLNTMFIQMACILVFSQFFYLFLKPCGQAGPVAQILAGIVLSLLTIIRKVHEFFLQKDSASYYIFFSFLLRTAFVFLIGLEIDLDFMKRNLKNSIVITLGSLVISGIIWLPFLWFLIRFMQIKGDFLTFYLAFLITLSNTAAPVVIRSIIDWKLHTSEIGRLAISCGLFIEITNIFIYTIVLSFISGTMTADIFIYSFATGVIILTNRFLASWLPKRNPKEKYLSKAETLAFIILILIIALTIESSNLNSTLFVFIIGLMFPREGKTYRTLIQRLSYPIHEFVLPVYFGYIGFRFSVNSLTKRHYLVLGMTVALSLLGKLLGVLFACSFLKIPKQYWLFLSTMLSVKGHIGLVLLDSNLMYKKWFTPVVHDMFVAALVIMTLLSGVITSLLLRSQEKSFAHIKTSLELFDTTEELRVLTCVYGVRHARGSISLVSALSGFSPGTSSSPFTPYLMHLIPLPKKRKTELLYHELDEDAGNSNGGDDEFGTNEGLEINDSIDSFTRDRKIMVRQVKLVAPMENMHEEICNATEDLRVSIVFLPFHKHQRIDGKTTNDGEVFRHMNRKVLKQAQCSIGIFVDRNITGFHQLHGSDSVQHVAALFFGGPDDREALSLCKWLTNNSQIHLTVIQFVADDSKTEKIVGDAVTKENNEVFLEIVSEDQTENETDRIFLEEFYHRFVTTGQVGFIEKRVSNGMQTLTILREIGEMYSLFVVGKNRGDCPMTSGMNDWEECPELGTVGDFLASSNMDVNASVLVVQRHRNSFDSFVDE</sequence>
<protein>
    <recommendedName>
        <fullName>Cation/H(+) antiporter 1</fullName>
    </recommendedName>
    <alternativeName>
        <fullName>Protein CATION/H+ EXCHANGER 1</fullName>
        <shortName>AtCHX1</shortName>
    </alternativeName>
</protein>